<comment type="function">
    <text evidence="3 4 5">Transcription regulator of the gene cluster that mediates the biosynthesis of cercosporin, a light-activated, non-host-selective toxin (PubMed:17462021, PubMed:26938470). The perylenequinone chromophore of cercosporin absorbs light energy to attain an electronically-activated triplet state and produces active oxygen species such as the hydroxyl radical, superoxide, hydrogen peroxide or singlet oxygen upon reaction with oxygen molecules. These reactive oxygen species cause damage to various cellular components including lipids, proteins and nucleic acids (PubMed:11701851).</text>
</comment>
<comment type="subcellular location">
    <subcellularLocation>
        <location evidence="1">Nucleus</location>
    </subcellularLocation>
</comment>
<comment type="disruption phenotype">
    <text evidence="3">Blocks the expression of the cercosporin cluster and abolishes the production of cercosporin.</text>
</comment>
<sequence length="397" mass="42300">MAKGSAGDAPNTRDTSFKRPKIRESCTHCSSQKIRCTKERPACARCVNKGLLCQYNISRRTGTRRHSVRATPEPETTISNAPTSSVPPDSVKIDGKQSPAMSDFALLDGLETFNNSLWHQPITTDIQDIDMQYFDFFDPGGYQAEPEPINSFDIDSTLLCGTSTAGYLPELDAEASTRPSSSSSPPSQRSDGGRATTHGGGGCISTALQIFSELHVSSSACPIAAGAPSHNIREFDHVLDSNRAALEKLSSILDCPPCCHDQEVLTALFLAVQKALSWYSAALDVAGDGEPTSPSSRVKSPPAFLGSYALGAQAQTLARAYVVMAQLQQHFQPLLAKLQRKSSLSALGARSSSTTSLSSVSSLQSSTSGSAVIECQKRALQEALEDVVAKIEGIKRG</sequence>
<dbReference type="EMBL" id="DQ991510">
    <property type="protein sequence ID" value="ABK64185.1"/>
    <property type="molecule type" value="Genomic_DNA"/>
</dbReference>
<dbReference type="SMR" id="A0ST46"/>
<dbReference type="PHI-base" id="PHI:1050"/>
<dbReference type="GO" id="GO:0005634">
    <property type="term" value="C:nucleus"/>
    <property type="evidence" value="ECO:0007669"/>
    <property type="project" value="UniProtKB-SubCell"/>
</dbReference>
<dbReference type="GO" id="GO:0003677">
    <property type="term" value="F:DNA binding"/>
    <property type="evidence" value="ECO:0007669"/>
    <property type="project" value="UniProtKB-KW"/>
</dbReference>
<dbReference type="GO" id="GO:0000981">
    <property type="term" value="F:DNA-binding transcription factor activity, RNA polymerase II-specific"/>
    <property type="evidence" value="ECO:0007669"/>
    <property type="project" value="InterPro"/>
</dbReference>
<dbReference type="GO" id="GO:0008270">
    <property type="term" value="F:zinc ion binding"/>
    <property type="evidence" value="ECO:0007669"/>
    <property type="project" value="InterPro"/>
</dbReference>
<dbReference type="GO" id="GO:0045122">
    <property type="term" value="P:aflatoxin biosynthetic process"/>
    <property type="evidence" value="ECO:0007669"/>
    <property type="project" value="InterPro"/>
</dbReference>
<dbReference type="CDD" id="cd00067">
    <property type="entry name" value="GAL4"/>
    <property type="match status" value="1"/>
</dbReference>
<dbReference type="Gene3D" id="4.10.240.10">
    <property type="entry name" value="Zn(2)-C6 fungal-type DNA-binding domain"/>
    <property type="match status" value="1"/>
</dbReference>
<dbReference type="InterPro" id="IPR013700">
    <property type="entry name" value="AflR"/>
</dbReference>
<dbReference type="InterPro" id="IPR050675">
    <property type="entry name" value="OAF3"/>
</dbReference>
<dbReference type="InterPro" id="IPR036864">
    <property type="entry name" value="Zn2-C6_fun-type_DNA-bd_sf"/>
</dbReference>
<dbReference type="InterPro" id="IPR001138">
    <property type="entry name" value="Zn2Cys6_DnaBD"/>
</dbReference>
<dbReference type="PANTHER" id="PTHR31069:SF31">
    <property type="entry name" value="MONODICTYPHENONE CLUSTER TRANSCRIPTION FACTOR-RELATED"/>
    <property type="match status" value="1"/>
</dbReference>
<dbReference type="PANTHER" id="PTHR31069">
    <property type="entry name" value="OLEATE-ACTIVATED TRANSCRIPTION FACTOR 1-RELATED"/>
    <property type="match status" value="1"/>
</dbReference>
<dbReference type="Pfam" id="PF08493">
    <property type="entry name" value="AflR"/>
    <property type="match status" value="1"/>
</dbReference>
<dbReference type="Pfam" id="PF00172">
    <property type="entry name" value="Zn_clus"/>
    <property type="match status" value="1"/>
</dbReference>
<dbReference type="PRINTS" id="PR00755">
    <property type="entry name" value="AFLATOXINBRP"/>
</dbReference>
<dbReference type="SMART" id="SM00066">
    <property type="entry name" value="GAL4"/>
    <property type="match status" value="1"/>
</dbReference>
<dbReference type="SUPFAM" id="SSF57701">
    <property type="entry name" value="Zn2/Cys6 DNA-binding domain"/>
    <property type="match status" value="1"/>
</dbReference>
<dbReference type="PROSITE" id="PS00463">
    <property type="entry name" value="ZN2_CY6_FUNGAL_1"/>
    <property type="match status" value="1"/>
</dbReference>
<dbReference type="PROSITE" id="PS50048">
    <property type="entry name" value="ZN2_CY6_FUNGAL_2"/>
    <property type="match status" value="1"/>
</dbReference>
<organism>
    <name type="scientific">Cercospora nicotianae</name>
    <name type="common">Barn spot disease fungus</name>
    <dbReference type="NCBI Taxonomy" id="29003"/>
    <lineage>
        <taxon>Eukaryota</taxon>
        <taxon>Fungi</taxon>
        <taxon>Dikarya</taxon>
        <taxon>Ascomycota</taxon>
        <taxon>Pezizomycotina</taxon>
        <taxon>Dothideomycetes</taxon>
        <taxon>Dothideomycetidae</taxon>
        <taxon>Mycosphaerellales</taxon>
        <taxon>Mycosphaerellaceae</taxon>
        <taxon>Cercospora</taxon>
    </lineage>
</organism>
<feature type="chain" id="PRO_0000444972" description="Cercosporin biosynthesis regulatory protein CTB8">
    <location>
        <begin position="1"/>
        <end position="397"/>
    </location>
</feature>
<feature type="DNA-binding region" description="Zn(2)-C6 fungal-type" evidence="1">
    <location>
        <begin position="26"/>
        <end position="53"/>
    </location>
</feature>
<feature type="region of interest" description="Disordered" evidence="2">
    <location>
        <begin position="62"/>
        <end position="92"/>
    </location>
</feature>
<feature type="region of interest" description="Disordered" evidence="2">
    <location>
        <begin position="173"/>
        <end position="198"/>
    </location>
</feature>
<feature type="compositionally biased region" description="Polar residues" evidence="2">
    <location>
        <begin position="74"/>
        <end position="87"/>
    </location>
</feature>
<feature type="compositionally biased region" description="Low complexity" evidence="2">
    <location>
        <begin position="179"/>
        <end position="197"/>
    </location>
</feature>
<evidence type="ECO:0000255" key="1">
    <source>
        <dbReference type="PROSITE-ProRule" id="PRU00227"/>
    </source>
</evidence>
<evidence type="ECO:0000256" key="2">
    <source>
        <dbReference type="SAM" id="MobiDB-lite"/>
    </source>
</evidence>
<evidence type="ECO:0000269" key="3">
    <source>
    </source>
</evidence>
<evidence type="ECO:0000269" key="4">
    <source>
    </source>
</evidence>
<evidence type="ECO:0000303" key="5">
    <source>
    </source>
</evidence>
<evidence type="ECO:0000303" key="6">
    <source>
    </source>
</evidence>
<gene>
    <name evidence="6" type="primary">CTB8</name>
</gene>
<name>CTB8_CERNC</name>
<keyword id="KW-0238">DNA-binding</keyword>
<keyword id="KW-0479">Metal-binding</keyword>
<keyword id="KW-0539">Nucleus</keyword>
<keyword id="KW-0804">Transcription</keyword>
<keyword id="KW-0805">Transcription regulation</keyword>
<keyword id="KW-0862">Zinc</keyword>
<proteinExistence type="evidence at transcript level"/>
<reference key="1">
    <citation type="journal article" date="2007" name="Mol. Microbiol.">
        <title>Molecular analysis of the cercosporin biosynthetic gene cluster in Cercospora nicotianae.</title>
        <authorList>
            <person name="Chen H."/>
            <person name="Lee M.H."/>
            <person name="Daub M.E."/>
            <person name="Chung K.R."/>
        </authorList>
    </citation>
    <scope>NUCLEOTIDE SEQUENCE [GENOMIC DNA]</scope>
    <scope>FUNCTION</scope>
    <scope>INDUCTION</scope>
    <scope>DISRUPTION PHENOTYPE</scope>
</reference>
<reference key="2">
    <citation type="journal article" date="2000" name="Annu. Rev. Phytopathol.">
        <title>The photoactivated cercospora toxin cercosporin: contributions to plant disease and fundamental biology.</title>
        <authorList>
            <person name="Daub M.E."/>
            <person name="Ehrenshaft M."/>
        </authorList>
    </citation>
    <scope>REVIEW ON CERCOSPORIN</scope>
</reference>
<reference key="3">
    <citation type="journal article" date="2016" name="J. Am. Chem. Soc.">
        <title>Molecular characterization of the cercosporin biosynthetic pathway in the fungal plant pathogen Cercospora nicotianae.</title>
        <authorList>
            <person name="Newman A.G."/>
            <person name="Townsend C.A."/>
        </authorList>
    </citation>
    <scope>FUNCTION</scope>
</reference>
<accession>A0ST46</accession>
<protein>
    <recommendedName>
        <fullName evidence="6">Cercosporin biosynthesis regulatory protein CTB8</fullName>
    </recommendedName>
    <alternativeName>
        <fullName evidence="6">Cercosporin toxin biosynthesis cluster protein 8</fullName>
    </alternativeName>
</protein>